<gene>
    <name evidence="1" type="primary">aroB</name>
    <name type="ordered locus">CPR_0689</name>
</gene>
<comment type="function">
    <text evidence="1">Catalyzes the conversion of 3-deoxy-D-arabino-heptulosonate 7-phosphate (DAHP) to dehydroquinate (DHQ).</text>
</comment>
<comment type="catalytic activity">
    <reaction evidence="1">
        <text>7-phospho-2-dehydro-3-deoxy-D-arabino-heptonate = 3-dehydroquinate + phosphate</text>
        <dbReference type="Rhea" id="RHEA:21968"/>
        <dbReference type="ChEBI" id="CHEBI:32364"/>
        <dbReference type="ChEBI" id="CHEBI:43474"/>
        <dbReference type="ChEBI" id="CHEBI:58394"/>
        <dbReference type="EC" id="4.2.3.4"/>
    </reaction>
</comment>
<comment type="cofactor">
    <cofactor evidence="1">
        <name>Co(2+)</name>
        <dbReference type="ChEBI" id="CHEBI:48828"/>
    </cofactor>
    <cofactor evidence="1">
        <name>Zn(2+)</name>
        <dbReference type="ChEBI" id="CHEBI:29105"/>
    </cofactor>
    <text evidence="1">Binds 1 divalent metal cation per subunit. Can use either Co(2+) or Zn(2+).</text>
</comment>
<comment type="cofactor">
    <cofactor evidence="1">
        <name>NAD(+)</name>
        <dbReference type="ChEBI" id="CHEBI:57540"/>
    </cofactor>
</comment>
<comment type="pathway">
    <text evidence="1">Metabolic intermediate biosynthesis; chorismate biosynthesis; chorismate from D-erythrose 4-phosphate and phosphoenolpyruvate: step 2/7.</text>
</comment>
<comment type="subcellular location">
    <subcellularLocation>
        <location evidence="1">Cytoplasm</location>
    </subcellularLocation>
</comment>
<comment type="similarity">
    <text evidence="1">Belongs to the sugar phosphate cyclases superfamily. Dehydroquinate synthase family.</text>
</comment>
<accession>Q0SV35</accession>
<feature type="chain" id="PRO_1000094493" description="3-dehydroquinate synthase">
    <location>
        <begin position="1"/>
        <end position="350"/>
    </location>
</feature>
<feature type="binding site" evidence="1">
    <location>
        <begin position="106"/>
        <end position="110"/>
    </location>
    <ligand>
        <name>NAD(+)</name>
        <dbReference type="ChEBI" id="CHEBI:57540"/>
    </ligand>
</feature>
<feature type="binding site" evidence="1">
    <location>
        <begin position="130"/>
        <end position="131"/>
    </location>
    <ligand>
        <name>NAD(+)</name>
        <dbReference type="ChEBI" id="CHEBI:57540"/>
    </ligand>
</feature>
<feature type="binding site" evidence="1">
    <location>
        <position position="143"/>
    </location>
    <ligand>
        <name>NAD(+)</name>
        <dbReference type="ChEBI" id="CHEBI:57540"/>
    </ligand>
</feature>
<feature type="binding site" evidence="1">
    <location>
        <position position="152"/>
    </location>
    <ligand>
        <name>NAD(+)</name>
        <dbReference type="ChEBI" id="CHEBI:57540"/>
    </ligand>
</feature>
<feature type="binding site" evidence="1">
    <location>
        <position position="185"/>
    </location>
    <ligand>
        <name>Zn(2+)</name>
        <dbReference type="ChEBI" id="CHEBI:29105"/>
    </ligand>
</feature>
<feature type="binding site" evidence="1">
    <location>
        <position position="246"/>
    </location>
    <ligand>
        <name>Zn(2+)</name>
        <dbReference type="ChEBI" id="CHEBI:29105"/>
    </ligand>
</feature>
<feature type="binding site" evidence="1">
    <location>
        <position position="263"/>
    </location>
    <ligand>
        <name>Zn(2+)</name>
        <dbReference type="ChEBI" id="CHEBI:29105"/>
    </ligand>
</feature>
<dbReference type="EC" id="4.2.3.4" evidence="1"/>
<dbReference type="EMBL" id="CP000312">
    <property type="protein sequence ID" value="ABG86397.1"/>
    <property type="molecule type" value="Genomic_DNA"/>
</dbReference>
<dbReference type="RefSeq" id="WP_011591766.1">
    <property type="nucleotide sequence ID" value="NC_008262.1"/>
</dbReference>
<dbReference type="SMR" id="Q0SV35"/>
<dbReference type="KEGG" id="cpr:CPR_0689"/>
<dbReference type="UniPathway" id="UPA00053">
    <property type="reaction ID" value="UER00085"/>
</dbReference>
<dbReference type="Proteomes" id="UP000001824">
    <property type="component" value="Chromosome"/>
</dbReference>
<dbReference type="GO" id="GO:0005737">
    <property type="term" value="C:cytoplasm"/>
    <property type="evidence" value="ECO:0007669"/>
    <property type="project" value="UniProtKB-SubCell"/>
</dbReference>
<dbReference type="GO" id="GO:0003856">
    <property type="term" value="F:3-dehydroquinate synthase activity"/>
    <property type="evidence" value="ECO:0007669"/>
    <property type="project" value="UniProtKB-UniRule"/>
</dbReference>
<dbReference type="GO" id="GO:0046872">
    <property type="term" value="F:metal ion binding"/>
    <property type="evidence" value="ECO:0007669"/>
    <property type="project" value="UniProtKB-KW"/>
</dbReference>
<dbReference type="GO" id="GO:0000166">
    <property type="term" value="F:nucleotide binding"/>
    <property type="evidence" value="ECO:0007669"/>
    <property type="project" value="UniProtKB-KW"/>
</dbReference>
<dbReference type="GO" id="GO:0008652">
    <property type="term" value="P:amino acid biosynthetic process"/>
    <property type="evidence" value="ECO:0007669"/>
    <property type="project" value="UniProtKB-KW"/>
</dbReference>
<dbReference type="GO" id="GO:0009073">
    <property type="term" value="P:aromatic amino acid family biosynthetic process"/>
    <property type="evidence" value="ECO:0007669"/>
    <property type="project" value="UniProtKB-KW"/>
</dbReference>
<dbReference type="GO" id="GO:0009423">
    <property type="term" value="P:chorismate biosynthetic process"/>
    <property type="evidence" value="ECO:0007669"/>
    <property type="project" value="UniProtKB-UniRule"/>
</dbReference>
<dbReference type="CDD" id="cd08195">
    <property type="entry name" value="DHQS"/>
    <property type="match status" value="1"/>
</dbReference>
<dbReference type="FunFam" id="3.40.50.1970:FF:000007">
    <property type="entry name" value="Pentafunctional AROM polypeptide"/>
    <property type="match status" value="1"/>
</dbReference>
<dbReference type="Gene3D" id="3.40.50.1970">
    <property type="match status" value="1"/>
</dbReference>
<dbReference type="Gene3D" id="1.20.1090.10">
    <property type="entry name" value="Dehydroquinate synthase-like - alpha domain"/>
    <property type="match status" value="1"/>
</dbReference>
<dbReference type="HAMAP" id="MF_00110">
    <property type="entry name" value="DHQ_synthase"/>
    <property type="match status" value="1"/>
</dbReference>
<dbReference type="InterPro" id="IPR050071">
    <property type="entry name" value="Dehydroquinate_synthase"/>
</dbReference>
<dbReference type="InterPro" id="IPR016037">
    <property type="entry name" value="DHQ_synth_AroB"/>
</dbReference>
<dbReference type="InterPro" id="IPR030963">
    <property type="entry name" value="DHQ_synth_fam"/>
</dbReference>
<dbReference type="InterPro" id="IPR030960">
    <property type="entry name" value="DHQS/DOIS_N"/>
</dbReference>
<dbReference type="InterPro" id="IPR056179">
    <property type="entry name" value="DHQS_C"/>
</dbReference>
<dbReference type="NCBIfam" id="TIGR01357">
    <property type="entry name" value="aroB"/>
    <property type="match status" value="1"/>
</dbReference>
<dbReference type="PANTHER" id="PTHR43622">
    <property type="entry name" value="3-DEHYDROQUINATE SYNTHASE"/>
    <property type="match status" value="1"/>
</dbReference>
<dbReference type="PANTHER" id="PTHR43622:SF7">
    <property type="entry name" value="3-DEHYDROQUINATE SYNTHASE, CHLOROPLASTIC"/>
    <property type="match status" value="1"/>
</dbReference>
<dbReference type="Pfam" id="PF01761">
    <property type="entry name" value="DHQ_synthase"/>
    <property type="match status" value="1"/>
</dbReference>
<dbReference type="Pfam" id="PF24621">
    <property type="entry name" value="DHQS_C"/>
    <property type="match status" value="1"/>
</dbReference>
<dbReference type="PIRSF" id="PIRSF001455">
    <property type="entry name" value="DHQ_synth"/>
    <property type="match status" value="1"/>
</dbReference>
<dbReference type="SUPFAM" id="SSF56796">
    <property type="entry name" value="Dehydroquinate synthase-like"/>
    <property type="match status" value="1"/>
</dbReference>
<evidence type="ECO:0000255" key="1">
    <source>
        <dbReference type="HAMAP-Rule" id="MF_00110"/>
    </source>
</evidence>
<sequence>MKVLRVNLDEKSYDIVIQKDLKDYFGEYIKTVFDGKKVAIITDDNLNDIYGEAIKKNIENEGFEVEVISVTPGEKSKSFSILPGIYNKLLDFKLTRSDLIIALGGGVVGDLAGFVASTFLRGISFIQIPTSLLAQVDSSVGGKVAVDLERGKNLVGSFYHPQLVLIDPNMLGTLPEKYFNDGLGEVIKYGCIKSKELFEKLEGFKNKEDLKENIGEIIYECCNIKRELVENDEKDLGERMILNFGHTLGHAIEQIYNYETYSHGEAVAIGMNMISKIAEEKDLTKKGTAERIESLLKKYGLNTDVNIEDNGLAREAIKLDKKNLNGNLNVILLKDIGEGYIYNTTVEFFE</sequence>
<name>AROB_CLOPS</name>
<keyword id="KW-0028">Amino-acid biosynthesis</keyword>
<keyword id="KW-0057">Aromatic amino acid biosynthesis</keyword>
<keyword id="KW-0170">Cobalt</keyword>
<keyword id="KW-0963">Cytoplasm</keyword>
<keyword id="KW-0456">Lyase</keyword>
<keyword id="KW-0479">Metal-binding</keyword>
<keyword id="KW-0520">NAD</keyword>
<keyword id="KW-0547">Nucleotide-binding</keyword>
<keyword id="KW-0862">Zinc</keyword>
<organism>
    <name type="scientific">Clostridium perfringens (strain SM101 / Type A)</name>
    <dbReference type="NCBI Taxonomy" id="289380"/>
    <lineage>
        <taxon>Bacteria</taxon>
        <taxon>Bacillati</taxon>
        <taxon>Bacillota</taxon>
        <taxon>Clostridia</taxon>
        <taxon>Eubacteriales</taxon>
        <taxon>Clostridiaceae</taxon>
        <taxon>Clostridium</taxon>
    </lineage>
</organism>
<reference key="1">
    <citation type="journal article" date="2006" name="Genome Res.">
        <title>Skewed genomic variability in strains of the toxigenic bacterial pathogen, Clostridium perfringens.</title>
        <authorList>
            <person name="Myers G.S.A."/>
            <person name="Rasko D.A."/>
            <person name="Cheung J.K."/>
            <person name="Ravel J."/>
            <person name="Seshadri R."/>
            <person name="DeBoy R.T."/>
            <person name="Ren Q."/>
            <person name="Varga J."/>
            <person name="Awad M.M."/>
            <person name="Brinkac L.M."/>
            <person name="Daugherty S.C."/>
            <person name="Haft D.H."/>
            <person name="Dodson R.J."/>
            <person name="Madupu R."/>
            <person name="Nelson W.C."/>
            <person name="Rosovitz M.J."/>
            <person name="Sullivan S.A."/>
            <person name="Khouri H."/>
            <person name="Dimitrov G.I."/>
            <person name="Watkins K.L."/>
            <person name="Mulligan S."/>
            <person name="Benton J."/>
            <person name="Radune D."/>
            <person name="Fisher D.J."/>
            <person name="Atkins H.S."/>
            <person name="Hiscox T."/>
            <person name="Jost B.H."/>
            <person name="Billington S.J."/>
            <person name="Songer J.G."/>
            <person name="McClane B.A."/>
            <person name="Titball R.W."/>
            <person name="Rood J.I."/>
            <person name="Melville S.B."/>
            <person name="Paulsen I.T."/>
        </authorList>
    </citation>
    <scope>NUCLEOTIDE SEQUENCE [LARGE SCALE GENOMIC DNA]</scope>
    <source>
        <strain>SM101 / Type A</strain>
    </source>
</reference>
<proteinExistence type="inferred from homology"/>
<protein>
    <recommendedName>
        <fullName evidence="1">3-dehydroquinate synthase</fullName>
        <shortName evidence="1">DHQS</shortName>
        <ecNumber evidence="1">4.2.3.4</ecNumber>
    </recommendedName>
</protein>